<sequence>MIIKPRVRGFICVTTHPVGCEANVKEQIDYVTSHGPIANGPKKVLVIGASTGYGLAARISAAFGSGADTLGVFFERAGGETKPGTAGWYNSAAFEKFAAEKGRYARSINGDAFSDKVKQVTIDTIKQDLGKVDLVVYSLAAPRRTHPKTGETISSTLKPVGKAVTFRGLDTDKEVIREVSLEPATQEEIDGTVAVMGGEDWQMWIDALDEAGVLADGAKTTAFTYLGEQITHDIYWNGSIGEAKKDLDKKVLSIRDKLAAHGGDARVSVLKAVVTQASSAIPMMPLYLSLLFKVMKEQGTHEGCIEQVYGLLKDSLYGATPHVDEEGRLRADYKELDPQVQGKVVAMWDKVTNENLYEMTDFAGYKTEFLRLFGFEIAGVDYDADVNPDVKIPGIIDTTV</sequence>
<protein>
    <recommendedName>
        <fullName evidence="1">Enoyl-[acyl-carrier-protein] reductase [NADH]</fullName>
        <shortName evidence="1">ENR</shortName>
        <ecNumber evidence="1">1.3.1.9</ecNumber>
    </recommendedName>
</protein>
<accession>B1Z1S8</accession>
<name>FABV_BURA4</name>
<feature type="chain" id="PRO_1000188356" description="Enoyl-[acyl-carrier-protein] reductase [NADH]">
    <location>
        <begin position="1"/>
        <end position="400"/>
    </location>
</feature>
<feature type="active site" description="Proton donor" evidence="1">
    <location>
        <position position="235"/>
    </location>
</feature>
<feature type="binding site" evidence="1">
    <location>
        <begin position="48"/>
        <end position="53"/>
    </location>
    <ligand>
        <name>NAD(+)</name>
        <dbReference type="ChEBI" id="CHEBI:57540"/>
    </ligand>
</feature>
<feature type="binding site" evidence="1">
    <location>
        <begin position="74"/>
        <end position="75"/>
    </location>
    <ligand>
        <name>NAD(+)</name>
        <dbReference type="ChEBI" id="CHEBI:57540"/>
    </ligand>
</feature>
<feature type="binding site" evidence="1">
    <location>
        <begin position="111"/>
        <end position="112"/>
    </location>
    <ligand>
        <name>NAD(+)</name>
        <dbReference type="ChEBI" id="CHEBI:57540"/>
    </ligand>
</feature>
<feature type="binding site" evidence="1">
    <location>
        <begin position="139"/>
        <end position="140"/>
    </location>
    <ligand>
        <name>NAD(+)</name>
        <dbReference type="ChEBI" id="CHEBI:57540"/>
    </ligand>
</feature>
<feature type="binding site" evidence="1">
    <location>
        <position position="225"/>
    </location>
    <ligand>
        <name>substrate</name>
    </ligand>
</feature>
<feature type="binding site" evidence="1">
    <location>
        <position position="244"/>
    </location>
    <ligand>
        <name>NAD(+)</name>
        <dbReference type="ChEBI" id="CHEBI:57540"/>
    </ligand>
</feature>
<feature type="binding site" evidence="1">
    <location>
        <begin position="273"/>
        <end position="275"/>
    </location>
    <ligand>
        <name>NAD(+)</name>
        <dbReference type="ChEBI" id="CHEBI:57540"/>
    </ligand>
</feature>
<feature type="site" description="Plays an important role in discriminating NADH against NADPH" evidence="1">
    <location>
        <position position="75"/>
    </location>
</feature>
<reference key="1">
    <citation type="submission" date="2008-04" db="EMBL/GenBank/DDBJ databases">
        <title>Complete sequence of chromosome 2 of Burkholderia ambifaria MC40-6.</title>
        <authorList>
            <person name="Copeland A."/>
            <person name="Lucas S."/>
            <person name="Lapidus A."/>
            <person name="Glavina del Rio T."/>
            <person name="Dalin E."/>
            <person name="Tice H."/>
            <person name="Pitluck S."/>
            <person name="Chain P."/>
            <person name="Malfatti S."/>
            <person name="Shin M."/>
            <person name="Vergez L."/>
            <person name="Lang D."/>
            <person name="Schmutz J."/>
            <person name="Larimer F."/>
            <person name="Land M."/>
            <person name="Hauser L."/>
            <person name="Kyrpides N."/>
            <person name="Lykidis A."/>
            <person name="Ramette A."/>
            <person name="Konstantinidis K."/>
            <person name="Tiedje J."/>
            <person name="Richardson P."/>
        </authorList>
    </citation>
    <scope>NUCLEOTIDE SEQUENCE [LARGE SCALE GENOMIC DNA]</scope>
    <source>
        <strain>MC40-6</strain>
    </source>
</reference>
<evidence type="ECO:0000255" key="1">
    <source>
        <dbReference type="HAMAP-Rule" id="MF_01838"/>
    </source>
</evidence>
<dbReference type="EC" id="1.3.1.9" evidence="1"/>
<dbReference type="EMBL" id="CP001026">
    <property type="protein sequence ID" value="ACB67783.1"/>
    <property type="molecule type" value="Genomic_DNA"/>
</dbReference>
<dbReference type="RefSeq" id="WP_012367008.1">
    <property type="nucleotide sequence ID" value="NC_010552.1"/>
</dbReference>
<dbReference type="SMR" id="B1Z1S8"/>
<dbReference type="KEGG" id="bac:BamMC406_5339"/>
<dbReference type="HOGENOM" id="CLU_057698_1_0_4"/>
<dbReference type="OrthoDB" id="9802260at2"/>
<dbReference type="UniPathway" id="UPA00094"/>
<dbReference type="Proteomes" id="UP000001680">
    <property type="component" value="Chromosome 2"/>
</dbReference>
<dbReference type="GO" id="GO:0004318">
    <property type="term" value="F:enoyl-[acyl-carrier-protein] reductase (NADH) activity"/>
    <property type="evidence" value="ECO:0007669"/>
    <property type="project" value="UniProtKB-UniRule"/>
</dbReference>
<dbReference type="GO" id="GO:0051287">
    <property type="term" value="F:NAD binding"/>
    <property type="evidence" value="ECO:0007669"/>
    <property type="project" value="UniProtKB-UniRule"/>
</dbReference>
<dbReference type="GO" id="GO:0050343">
    <property type="term" value="F:trans-2-enoyl-CoA reductase (NADH) activity"/>
    <property type="evidence" value="ECO:0007669"/>
    <property type="project" value="TreeGrafter"/>
</dbReference>
<dbReference type="GO" id="GO:0006633">
    <property type="term" value="P:fatty acid biosynthetic process"/>
    <property type="evidence" value="ECO:0007669"/>
    <property type="project" value="UniProtKB-UniRule"/>
</dbReference>
<dbReference type="FunFam" id="3.40.50.720:FF:000221">
    <property type="entry name" value="Enoyl-[acyl-carrier-protein] reductase [NADH]"/>
    <property type="match status" value="1"/>
</dbReference>
<dbReference type="Gene3D" id="3.40.50.720">
    <property type="entry name" value="NAD(P)-binding Rossmann-like Domain"/>
    <property type="match status" value="1"/>
</dbReference>
<dbReference type="HAMAP" id="MF_01838">
    <property type="entry name" value="FabV_reductase"/>
    <property type="match status" value="1"/>
</dbReference>
<dbReference type="InterPro" id="IPR024906">
    <property type="entry name" value="Eno_Rdtase_FAD-bd_dom"/>
</dbReference>
<dbReference type="InterPro" id="IPR024910">
    <property type="entry name" value="Enoyl-CoA_Rdtase_cat_dom"/>
</dbReference>
<dbReference type="InterPro" id="IPR050048">
    <property type="entry name" value="FabV-like_NADH_b"/>
</dbReference>
<dbReference type="InterPro" id="IPR010758">
    <property type="entry name" value="Trans-2-enoyl-CoA_reductase"/>
</dbReference>
<dbReference type="NCBIfam" id="NF043048">
    <property type="entry name" value="EnoyACPredFabV"/>
    <property type="match status" value="1"/>
</dbReference>
<dbReference type="NCBIfam" id="NF010177">
    <property type="entry name" value="PRK13656.1"/>
    <property type="match status" value="1"/>
</dbReference>
<dbReference type="PANTHER" id="PTHR37480">
    <property type="entry name" value="ENOYL-[ACYL-CARRIER-PROTEIN] REDUCTASE [NADH]"/>
    <property type="match status" value="1"/>
</dbReference>
<dbReference type="PANTHER" id="PTHR37480:SF1">
    <property type="entry name" value="ENOYL-[ACYL-CARRIER-PROTEIN] REDUCTASE [NADH]"/>
    <property type="match status" value="1"/>
</dbReference>
<dbReference type="Pfam" id="PF07055">
    <property type="entry name" value="Eno-Rase_FAD_bd"/>
    <property type="match status" value="1"/>
</dbReference>
<dbReference type="Pfam" id="PF12242">
    <property type="entry name" value="Eno-Rase_NADH_b"/>
    <property type="match status" value="1"/>
</dbReference>
<dbReference type="Pfam" id="PF12241">
    <property type="entry name" value="Enoyl_reductase"/>
    <property type="match status" value="1"/>
</dbReference>
<proteinExistence type="inferred from homology"/>
<organism>
    <name type="scientific">Burkholderia ambifaria (strain MC40-6)</name>
    <dbReference type="NCBI Taxonomy" id="398577"/>
    <lineage>
        <taxon>Bacteria</taxon>
        <taxon>Pseudomonadati</taxon>
        <taxon>Pseudomonadota</taxon>
        <taxon>Betaproteobacteria</taxon>
        <taxon>Burkholderiales</taxon>
        <taxon>Burkholderiaceae</taxon>
        <taxon>Burkholderia</taxon>
        <taxon>Burkholderia cepacia complex</taxon>
    </lineage>
</organism>
<keyword id="KW-0275">Fatty acid biosynthesis</keyword>
<keyword id="KW-0276">Fatty acid metabolism</keyword>
<keyword id="KW-0444">Lipid biosynthesis</keyword>
<keyword id="KW-0443">Lipid metabolism</keyword>
<keyword id="KW-0520">NAD</keyword>
<keyword id="KW-0560">Oxidoreductase</keyword>
<comment type="function">
    <text evidence="1">Involved in the final reduction of the elongation cycle of fatty acid synthesis (FAS II). Catalyzes the reduction of a carbon-carbon double bond in an enoyl moiety that is covalently linked to an acyl carrier protein (ACP).</text>
</comment>
<comment type="catalytic activity">
    <reaction evidence="1">
        <text>a 2,3-saturated acyl-[ACP] + NAD(+) = a (2E)-enoyl-[ACP] + NADH + H(+)</text>
        <dbReference type="Rhea" id="RHEA:10240"/>
        <dbReference type="Rhea" id="RHEA-COMP:9925"/>
        <dbReference type="Rhea" id="RHEA-COMP:9926"/>
        <dbReference type="ChEBI" id="CHEBI:15378"/>
        <dbReference type="ChEBI" id="CHEBI:57540"/>
        <dbReference type="ChEBI" id="CHEBI:57945"/>
        <dbReference type="ChEBI" id="CHEBI:78784"/>
        <dbReference type="ChEBI" id="CHEBI:78785"/>
        <dbReference type="EC" id="1.3.1.9"/>
    </reaction>
</comment>
<comment type="pathway">
    <text evidence="1">Lipid metabolism; fatty acid biosynthesis.</text>
</comment>
<comment type="subunit">
    <text evidence="1">Monomer.</text>
</comment>
<comment type="similarity">
    <text evidence="1">Belongs to the TER reductase family.</text>
</comment>
<gene>
    <name evidence="1" type="primary">fabV</name>
    <name type="ordered locus">BamMC406_5339</name>
</gene>